<name>AROC_STAES</name>
<keyword id="KW-0028">Amino-acid biosynthesis</keyword>
<keyword id="KW-0057">Aromatic amino acid biosynthesis</keyword>
<keyword id="KW-0274">FAD</keyword>
<keyword id="KW-0285">Flavoprotein</keyword>
<keyword id="KW-0288">FMN</keyword>
<keyword id="KW-0456">Lyase</keyword>
<keyword id="KW-0521">NADP</keyword>
<proteinExistence type="inferred from homology"/>
<evidence type="ECO:0000255" key="1">
    <source>
        <dbReference type="HAMAP-Rule" id="MF_00300"/>
    </source>
</evidence>
<organism>
    <name type="scientific">Staphylococcus epidermidis (strain ATCC 12228 / FDA PCI 1200)</name>
    <dbReference type="NCBI Taxonomy" id="176280"/>
    <lineage>
        <taxon>Bacteria</taxon>
        <taxon>Bacillati</taxon>
        <taxon>Bacillota</taxon>
        <taxon>Bacilli</taxon>
        <taxon>Bacillales</taxon>
        <taxon>Staphylococcaceae</taxon>
        <taxon>Staphylococcus</taxon>
    </lineage>
</organism>
<sequence>MRYLTSGESHGPQLTVIIEGVPANLEIKAEDINKEMFKRQGGYGRGRRMKIEKDTIEIVSGVRNGFTLGSPITLVVTNDDFTHWRKIMGVAPISDEERENMKRTITKPRPGHADLIGGMKYNHRDLRNVLERSSARETAARVAVGAVSKILLEQLDIHLYSRVVEIGGIKDKGLYDVDMFKNNVDKNDVRVIDENIAQQMRDKIDEAKKDGDSIGGVVQVMAENMPIGVGSYVHYDRKLDGRIAQGVVSINAFKGVSFGEGFKAAEKPGSEIQDEIHYNQDSGYFRATNHLGGFEGGMSNGMPIIVNGVMKPIPTLYKPLNSVDINTKEDFKATIERSDSCAVPAASVVCEHVVAFELAKAVLEEFQSNHMDQLVAQIKERRQLNIEF</sequence>
<reference key="1">
    <citation type="journal article" date="2003" name="Mol. Microbiol.">
        <title>Genome-based analysis of virulence genes in a non-biofilm-forming Staphylococcus epidermidis strain (ATCC 12228).</title>
        <authorList>
            <person name="Zhang Y.-Q."/>
            <person name="Ren S.-X."/>
            <person name="Li H.-L."/>
            <person name="Wang Y.-X."/>
            <person name="Fu G."/>
            <person name="Yang J."/>
            <person name="Qin Z.-Q."/>
            <person name="Miao Y.-G."/>
            <person name="Wang W.-Y."/>
            <person name="Chen R.-S."/>
            <person name="Shen Y."/>
            <person name="Chen Z."/>
            <person name="Yuan Z.-H."/>
            <person name="Zhao G.-P."/>
            <person name="Qu D."/>
            <person name="Danchin A."/>
            <person name="Wen Y.-M."/>
        </authorList>
    </citation>
    <scope>NUCLEOTIDE SEQUENCE [LARGE SCALE GENOMIC DNA]</scope>
    <source>
        <strain>ATCC 12228 / FDA PCI 1200</strain>
    </source>
</reference>
<accession>Q8CP67</accession>
<feature type="chain" id="PRO_0000140648" description="Chorismate synthase">
    <location>
        <begin position="1"/>
        <end position="388"/>
    </location>
</feature>
<feature type="binding site" evidence="1">
    <location>
        <position position="39"/>
    </location>
    <ligand>
        <name>NADP(+)</name>
        <dbReference type="ChEBI" id="CHEBI:58349"/>
    </ligand>
</feature>
<feature type="binding site" evidence="1">
    <location>
        <position position="45"/>
    </location>
    <ligand>
        <name>NADP(+)</name>
        <dbReference type="ChEBI" id="CHEBI:58349"/>
    </ligand>
</feature>
<feature type="binding site" evidence="1">
    <location>
        <begin position="132"/>
        <end position="134"/>
    </location>
    <ligand>
        <name>FMN</name>
        <dbReference type="ChEBI" id="CHEBI:58210"/>
    </ligand>
</feature>
<feature type="binding site" evidence="1">
    <location>
        <begin position="251"/>
        <end position="252"/>
    </location>
    <ligand>
        <name>FMN</name>
        <dbReference type="ChEBI" id="CHEBI:58210"/>
    </ligand>
</feature>
<feature type="binding site" evidence="1">
    <location>
        <position position="296"/>
    </location>
    <ligand>
        <name>FMN</name>
        <dbReference type="ChEBI" id="CHEBI:58210"/>
    </ligand>
</feature>
<feature type="binding site" evidence="1">
    <location>
        <begin position="311"/>
        <end position="315"/>
    </location>
    <ligand>
        <name>FMN</name>
        <dbReference type="ChEBI" id="CHEBI:58210"/>
    </ligand>
</feature>
<feature type="binding site" evidence="1">
    <location>
        <position position="337"/>
    </location>
    <ligand>
        <name>FMN</name>
        <dbReference type="ChEBI" id="CHEBI:58210"/>
    </ligand>
</feature>
<dbReference type="EC" id="4.2.3.5" evidence="1"/>
<dbReference type="EMBL" id="AE015929">
    <property type="protein sequence ID" value="AAO04752.1"/>
    <property type="molecule type" value="Genomic_DNA"/>
</dbReference>
<dbReference type="RefSeq" id="NP_764710.1">
    <property type="nucleotide sequence ID" value="NC_004461.1"/>
</dbReference>
<dbReference type="RefSeq" id="WP_001831020.1">
    <property type="nucleotide sequence ID" value="NZ_WBME01000006.1"/>
</dbReference>
<dbReference type="SMR" id="Q8CP67"/>
<dbReference type="GeneID" id="50018723"/>
<dbReference type="KEGG" id="sep:SE_1155"/>
<dbReference type="PATRIC" id="fig|176280.10.peg.1127"/>
<dbReference type="eggNOG" id="COG0082">
    <property type="taxonomic scope" value="Bacteria"/>
</dbReference>
<dbReference type="HOGENOM" id="CLU_034547_2_0_9"/>
<dbReference type="OrthoDB" id="9771806at2"/>
<dbReference type="UniPathway" id="UPA00053">
    <property type="reaction ID" value="UER00090"/>
</dbReference>
<dbReference type="Proteomes" id="UP000001411">
    <property type="component" value="Chromosome"/>
</dbReference>
<dbReference type="GO" id="GO:0005829">
    <property type="term" value="C:cytosol"/>
    <property type="evidence" value="ECO:0007669"/>
    <property type="project" value="TreeGrafter"/>
</dbReference>
<dbReference type="GO" id="GO:0004107">
    <property type="term" value="F:chorismate synthase activity"/>
    <property type="evidence" value="ECO:0007669"/>
    <property type="project" value="UniProtKB-UniRule"/>
</dbReference>
<dbReference type="GO" id="GO:0010181">
    <property type="term" value="F:FMN binding"/>
    <property type="evidence" value="ECO:0007669"/>
    <property type="project" value="TreeGrafter"/>
</dbReference>
<dbReference type="GO" id="GO:0008652">
    <property type="term" value="P:amino acid biosynthetic process"/>
    <property type="evidence" value="ECO:0007669"/>
    <property type="project" value="UniProtKB-KW"/>
</dbReference>
<dbReference type="GO" id="GO:0009073">
    <property type="term" value="P:aromatic amino acid family biosynthetic process"/>
    <property type="evidence" value="ECO:0007669"/>
    <property type="project" value="UniProtKB-KW"/>
</dbReference>
<dbReference type="GO" id="GO:0009423">
    <property type="term" value="P:chorismate biosynthetic process"/>
    <property type="evidence" value="ECO:0007669"/>
    <property type="project" value="UniProtKB-UniRule"/>
</dbReference>
<dbReference type="CDD" id="cd07304">
    <property type="entry name" value="Chorismate_synthase"/>
    <property type="match status" value="1"/>
</dbReference>
<dbReference type="FunFam" id="3.60.150.10:FF:000002">
    <property type="entry name" value="Chorismate synthase"/>
    <property type="match status" value="1"/>
</dbReference>
<dbReference type="Gene3D" id="3.60.150.10">
    <property type="entry name" value="Chorismate synthase AroC"/>
    <property type="match status" value="1"/>
</dbReference>
<dbReference type="HAMAP" id="MF_00300">
    <property type="entry name" value="Chorismate_synth"/>
    <property type="match status" value="1"/>
</dbReference>
<dbReference type="InterPro" id="IPR000453">
    <property type="entry name" value="Chorismate_synth"/>
</dbReference>
<dbReference type="InterPro" id="IPR035904">
    <property type="entry name" value="Chorismate_synth_AroC_sf"/>
</dbReference>
<dbReference type="InterPro" id="IPR020541">
    <property type="entry name" value="Chorismate_synthase_CS"/>
</dbReference>
<dbReference type="NCBIfam" id="TIGR00033">
    <property type="entry name" value="aroC"/>
    <property type="match status" value="1"/>
</dbReference>
<dbReference type="NCBIfam" id="NF003793">
    <property type="entry name" value="PRK05382.1"/>
    <property type="match status" value="1"/>
</dbReference>
<dbReference type="PANTHER" id="PTHR21085">
    <property type="entry name" value="CHORISMATE SYNTHASE"/>
    <property type="match status" value="1"/>
</dbReference>
<dbReference type="PANTHER" id="PTHR21085:SF0">
    <property type="entry name" value="CHORISMATE SYNTHASE"/>
    <property type="match status" value="1"/>
</dbReference>
<dbReference type="Pfam" id="PF01264">
    <property type="entry name" value="Chorismate_synt"/>
    <property type="match status" value="1"/>
</dbReference>
<dbReference type="PIRSF" id="PIRSF001456">
    <property type="entry name" value="Chorismate_synth"/>
    <property type="match status" value="1"/>
</dbReference>
<dbReference type="SUPFAM" id="SSF103263">
    <property type="entry name" value="Chorismate synthase, AroC"/>
    <property type="match status" value="1"/>
</dbReference>
<dbReference type="PROSITE" id="PS00787">
    <property type="entry name" value="CHORISMATE_SYNTHASE_1"/>
    <property type="match status" value="1"/>
</dbReference>
<dbReference type="PROSITE" id="PS00788">
    <property type="entry name" value="CHORISMATE_SYNTHASE_2"/>
    <property type="match status" value="1"/>
</dbReference>
<dbReference type="PROSITE" id="PS00789">
    <property type="entry name" value="CHORISMATE_SYNTHASE_3"/>
    <property type="match status" value="1"/>
</dbReference>
<comment type="function">
    <text evidence="1">Catalyzes the anti-1,4-elimination of the C-3 phosphate and the C-6 proR hydrogen from 5-enolpyruvylshikimate-3-phosphate (EPSP) to yield chorismate, which is the branch point compound that serves as the starting substrate for the three terminal pathways of aromatic amino acid biosynthesis. This reaction introduces a second double bond into the aromatic ring system.</text>
</comment>
<comment type="catalytic activity">
    <reaction evidence="1">
        <text>5-O-(1-carboxyvinyl)-3-phosphoshikimate = chorismate + phosphate</text>
        <dbReference type="Rhea" id="RHEA:21020"/>
        <dbReference type="ChEBI" id="CHEBI:29748"/>
        <dbReference type="ChEBI" id="CHEBI:43474"/>
        <dbReference type="ChEBI" id="CHEBI:57701"/>
        <dbReference type="EC" id="4.2.3.5"/>
    </reaction>
</comment>
<comment type="cofactor">
    <cofactor evidence="1">
        <name>FMNH2</name>
        <dbReference type="ChEBI" id="CHEBI:57618"/>
    </cofactor>
    <text evidence="1">Reduced FMN (FMNH(2)).</text>
</comment>
<comment type="pathway">
    <text evidence="1">Metabolic intermediate biosynthesis; chorismate biosynthesis; chorismate from D-erythrose 4-phosphate and phosphoenolpyruvate: step 7/7.</text>
</comment>
<comment type="subunit">
    <text evidence="1">Homotetramer.</text>
</comment>
<comment type="similarity">
    <text evidence="1">Belongs to the chorismate synthase family.</text>
</comment>
<gene>
    <name evidence="1" type="primary">aroC</name>
    <name type="ordered locus">SE_1155</name>
</gene>
<protein>
    <recommendedName>
        <fullName evidence="1">Chorismate synthase</fullName>
        <shortName evidence="1">CS</shortName>
        <ecNumber evidence="1">4.2.3.5</ecNumber>
    </recommendedName>
    <alternativeName>
        <fullName evidence="1">5-enolpyruvylshikimate-3-phosphate phospholyase</fullName>
    </alternativeName>
</protein>